<proteinExistence type="evidence at protein level"/>
<organism>
    <name type="scientific">Arabidopsis thaliana</name>
    <name type="common">Mouse-ear cress</name>
    <dbReference type="NCBI Taxonomy" id="3702"/>
    <lineage>
        <taxon>Eukaryota</taxon>
        <taxon>Viridiplantae</taxon>
        <taxon>Streptophyta</taxon>
        <taxon>Embryophyta</taxon>
        <taxon>Tracheophyta</taxon>
        <taxon>Spermatophyta</taxon>
        <taxon>Magnoliopsida</taxon>
        <taxon>eudicotyledons</taxon>
        <taxon>Gunneridae</taxon>
        <taxon>Pentapetalae</taxon>
        <taxon>rosids</taxon>
        <taxon>malvids</taxon>
        <taxon>Brassicales</taxon>
        <taxon>Brassicaceae</taxon>
        <taxon>Camelineae</taxon>
        <taxon>Arabidopsis</taxon>
    </lineage>
</organism>
<gene>
    <name type="primary">LSF2</name>
    <name type="ordered locus">At3g10940</name>
    <name type="ORF">F9F8.24</name>
</gene>
<protein>
    <recommendedName>
        <fullName>Phosphoglucan phosphatase LSF2, chloroplastic</fullName>
        <ecNumber evidence="3 4 5">3.1.3.-</ecNumber>
    </recommendedName>
    <alternativeName>
        <fullName evidence="6 7">Phosphoglucan phosphatase like sex Four2</fullName>
    </alternativeName>
    <alternativeName>
        <fullName evidence="7">Protein LIKE SEX4 2</fullName>
    </alternativeName>
</protein>
<evidence type="ECO:0000255" key="1"/>
<evidence type="ECO:0000255" key="2">
    <source>
        <dbReference type="PROSITE-ProRule" id="PRU00160"/>
    </source>
</evidence>
<evidence type="ECO:0000269" key="3">
    <source>
    </source>
</evidence>
<evidence type="ECO:0000269" key="4">
    <source>
    </source>
</evidence>
<evidence type="ECO:0000269" key="5">
    <source>
    </source>
</evidence>
<evidence type="ECO:0000303" key="6">
    <source>
    </source>
</evidence>
<evidence type="ECO:0000303" key="7">
    <source>
    </source>
</evidence>
<evidence type="ECO:0000305" key="8"/>
<evidence type="ECO:0000305" key="9">
    <source>
    </source>
</evidence>
<evidence type="ECO:0007744" key="10">
    <source>
        <dbReference type="PDB" id="4KYQ"/>
    </source>
</evidence>
<evidence type="ECO:0007744" key="11">
    <source>
        <dbReference type="PDB" id="4KYR"/>
    </source>
</evidence>
<evidence type="ECO:0007829" key="12">
    <source>
        <dbReference type="PDB" id="4KYQ"/>
    </source>
</evidence>
<evidence type="ECO:0007829" key="13">
    <source>
        <dbReference type="PDB" id="4KYR"/>
    </source>
</evidence>
<name>LSF2_ARATH</name>
<comment type="function">
    <text evidence="3 4 5">Starch-associated phosphoglucan phosphatase that selectively dephosphorylates the glucan C3 position. Probably participates in the regulation of starch degradation.</text>
</comment>
<comment type="subcellular location">
    <subcellularLocation>
        <location evidence="3">Plastid</location>
        <location evidence="3">Chloroplast</location>
    </subcellularLocation>
</comment>
<comment type="tissue specificity">
    <text evidence="3">Widely expressed.</text>
</comment>
<comment type="induction">
    <text evidence="3">Expressed with a circadian rhythm showing a peak at the end of the day and then decreasing to reach the lowest levels at the end of the night.</text>
</comment>
<comment type="disruption phenotype">
    <text evidence="3">No visible phenotype under normal growth conditions, but starch of mutant plants contains high levels of C3-bound phosphate.</text>
</comment>
<dbReference type="EC" id="3.1.3.-" evidence="3 4 5"/>
<dbReference type="EMBL" id="AC009991">
    <property type="protein sequence ID" value="AAF01527.1"/>
    <property type="molecule type" value="Genomic_DNA"/>
</dbReference>
<dbReference type="EMBL" id="CP002686">
    <property type="protein sequence ID" value="AEE74980.1"/>
    <property type="molecule type" value="Genomic_DNA"/>
</dbReference>
<dbReference type="EMBL" id="BT024510">
    <property type="protein sequence ID" value="ABD19691.1"/>
    <property type="molecule type" value="mRNA"/>
</dbReference>
<dbReference type="EMBL" id="AK226225">
    <property type="protein sequence ID" value="BAE98389.1"/>
    <property type="molecule type" value="mRNA"/>
</dbReference>
<dbReference type="EMBL" id="AY087019">
    <property type="protein sequence ID" value="AAM64580.1"/>
    <property type="molecule type" value="mRNA"/>
</dbReference>
<dbReference type="RefSeq" id="NP_566383.1">
    <property type="nucleotide sequence ID" value="NM_111931.3"/>
</dbReference>
<dbReference type="PDB" id="4KYQ">
    <property type="method" value="X-ray"/>
    <property type="resolution" value="1.64 A"/>
    <property type="chains" value="A=79-282"/>
</dbReference>
<dbReference type="PDB" id="4KYR">
    <property type="method" value="X-ray"/>
    <property type="resolution" value="2.30 A"/>
    <property type="chains" value="A=79-282"/>
</dbReference>
<dbReference type="PDBsum" id="4KYQ"/>
<dbReference type="PDBsum" id="4KYR"/>
<dbReference type="SMR" id="Q9SRK5"/>
<dbReference type="FunCoup" id="Q9SRK5">
    <property type="interactions" value="400"/>
</dbReference>
<dbReference type="STRING" id="3702.Q9SRK5"/>
<dbReference type="PaxDb" id="3702-AT3G10940.1"/>
<dbReference type="ProteomicsDB" id="238804"/>
<dbReference type="EnsemblPlants" id="AT3G10940.1">
    <property type="protein sequence ID" value="AT3G10940.1"/>
    <property type="gene ID" value="AT3G10940"/>
</dbReference>
<dbReference type="GeneID" id="820265"/>
<dbReference type="Gramene" id="AT3G10940.1">
    <property type="protein sequence ID" value="AT3G10940.1"/>
    <property type="gene ID" value="AT3G10940"/>
</dbReference>
<dbReference type="KEGG" id="ath:AT3G10940"/>
<dbReference type="Araport" id="AT3G10940"/>
<dbReference type="TAIR" id="AT3G10940">
    <property type="gene designation" value="LSF2"/>
</dbReference>
<dbReference type="eggNOG" id="KOG1716">
    <property type="taxonomic scope" value="Eukaryota"/>
</dbReference>
<dbReference type="HOGENOM" id="CLU_085882_0_0_1"/>
<dbReference type="InParanoid" id="Q9SRK5"/>
<dbReference type="OMA" id="HHMRRPA"/>
<dbReference type="PhylomeDB" id="Q9SRK5"/>
<dbReference type="EvolutionaryTrace" id="Q9SRK5"/>
<dbReference type="PRO" id="PR:Q9SRK5"/>
<dbReference type="Proteomes" id="UP000006548">
    <property type="component" value="Chromosome 3"/>
</dbReference>
<dbReference type="ExpressionAtlas" id="Q9SRK5">
    <property type="expression patterns" value="baseline and differential"/>
</dbReference>
<dbReference type="GO" id="GO:0009507">
    <property type="term" value="C:chloroplast"/>
    <property type="evidence" value="ECO:0000314"/>
    <property type="project" value="UniProtKB"/>
</dbReference>
<dbReference type="GO" id="GO:0019203">
    <property type="term" value="F:carbohydrate phosphatase activity"/>
    <property type="evidence" value="ECO:0000314"/>
    <property type="project" value="UniProtKB"/>
</dbReference>
<dbReference type="GO" id="GO:0004721">
    <property type="term" value="F:phosphoprotein phosphatase activity"/>
    <property type="evidence" value="ECO:0007669"/>
    <property type="project" value="UniProtKB-KW"/>
</dbReference>
<dbReference type="GO" id="GO:2001070">
    <property type="term" value="F:starch binding"/>
    <property type="evidence" value="ECO:0000314"/>
    <property type="project" value="UniProtKB"/>
</dbReference>
<dbReference type="GO" id="GO:0050308">
    <property type="term" value="F:sugar-phosphatase activity"/>
    <property type="evidence" value="ECO:0000314"/>
    <property type="project" value="TAIR"/>
</dbReference>
<dbReference type="GO" id="GO:0005983">
    <property type="term" value="P:starch catabolic process"/>
    <property type="evidence" value="ECO:0000314"/>
    <property type="project" value="UniProtKB"/>
</dbReference>
<dbReference type="CDD" id="cd14526">
    <property type="entry name" value="DSP_laforin-like"/>
    <property type="match status" value="1"/>
</dbReference>
<dbReference type="FunFam" id="3.90.190.10:FF:000075">
    <property type="entry name" value="Phosphoglucan phosphatase LSF2, chloroplastic"/>
    <property type="match status" value="1"/>
</dbReference>
<dbReference type="Gene3D" id="3.90.190.10">
    <property type="entry name" value="Protein tyrosine phosphatase superfamily"/>
    <property type="match status" value="1"/>
</dbReference>
<dbReference type="InterPro" id="IPR045204">
    <property type="entry name" value="DSP_laforin-like"/>
</dbReference>
<dbReference type="InterPro" id="IPR000340">
    <property type="entry name" value="Dual-sp_phosphatase_cat-dom"/>
</dbReference>
<dbReference type="InterPro" id="IPR029021">
    <property type="entry name" value="Prot-tyrosine_phosphatase-like"/>
</dbReference>
<dbReference type="InterPro" id="IPR052832">
    <property type="entry name" value="Starch-Glucan_Phosphatase"/>
</dbReference>
<dbReference type="InterPro" id="IPR000387">
    <property type="entry name" value="Tyr_Pase_dom"/>
</dbReference>
<dbReference type="InterPro" id="IPR020422">
    <property type="entry name" value="TYR_PHOSPHATASE_DUAL_dom"/>
</dbReference>
<dbReference type="PANTHER" id="PTHR46642">
    <property type="entry name" value="DUAL SPECIFICITY PHOSPHATASE, SUBGROUP, CATALYTIC DOMAIN"/>
    <property type="match status" value="1"/>
</dbReference>
<dbReference type="PANTHER" id="PTHR46642:SF2">
    <property type="entry name" value="PHOSPHOGLUCAN PHOSPHATASE LSF2, CHLOROPLASTIC"/>
    <property type="match status" value="1"/>
</dbReference>
<dbReference type="Pfam" id="PF00782">
    <property type="entry name" value="DSPc"/>
    <property type="match status" value="1"/>
</dbReference>
<dbReference type="SMART" id="SM00195">
    <property type="entry name" value="DSPc"/>
    <property type="match status" value="1"/>
</dbReference>
<dbReference type="SUPFAM" id="SSF52799">
    <property type="entry name" value="(Phosphotyrosine protein) phosphatases II"/>
    <property type="match status" value="1"/>
</dbReference>
<dbReference type="PROSITE" id="PS50056">
    <property type="entry name" value="TYR_PHOSPHATASE_2"/>
    <property type="match status" value="1"/>
</dbReference>
<dbReference type="PROSITE" id="PS50054">
    <property type="entry name" value="TYR_PHOSPHATASE_DUAL"/>
    <property type="match status" value="1"/>
</dbReference>
<sequence length="282" mass="32087">MSVIGSKSCIFSVARYTRENEKSSCFTSINKKSSLDLRFPRNLAGVSCKFSGENPGTNGVSLSSKNKMEDYNTAMKRLMRSPYEYHHDLGMNYTLIRDELIVGSQPQKPEDIDHLKQEQNVAYILNLQQDKDIEYWGIDLDSIVRRCKELGIRHMRRPAKDFDPLSLRSQLPKAVSSLEWAVSEGKGRVYVHCSAGLGRAPGVSIAYMYWFCDMNLNTAYDTLVSKRPCGPNKGAIRGATYDLAKNDPWKEPFESLPENAFEDIADWERKLIQERVRALRGT</sequence>
<keyword id="KW-0002">3D-structure</keyword>
<keyword id="KW-0119">Carbohydrate metabolism</keyword>
<keyword id="KW-0150">Chloroplast</keyword>
<keyword id="KW-0378">Hydrolase</keyword>
<keyword id="KW-0934">Plastid</keyword>
<keyword id="KW-0904">Protein phosphatase</keyword>
<keyword id="KW-1185">Reference proteome</keyword>
<keyword id="KW-0809">Transit peptide</keyword>
<accession>Q9SRK5</accession>
<accession>Q8LBS6</accession>
<feature type="transit peptide" description="Chloroplast" evidence="1">
    <location>
        <begin position="1"/>
        <end position="61"/>
    </location>
</feature>
<feature type="chain" id="PRO_0000417335" description="Phosphoglucan phosphatase LSF2, chloroplastic">
    <location>
        <begin position="62"/>
        <end position="282"/>
    </location>
</feature>
<feature type="domain" description="Tyrosine-protein phosphatase" evidence="2">
    <location>
        <begin position="92"/>
        <end position="249"/>
    </location>
</feature>
<feature type="short sequence motif" description="Glucan phosphatase signature motif CXAGXGR" evidence="9">
    <location>
        <begin position="193"/>
        <end position="199"/>
    </location>
</feature>
<feature type="active site" description="Phosphocysteine intermediate" evidence="2 9">
    <location>
        <position position="193"/>
    </location>
</feature>
<feature type="binding site" evidence="4 11">
    <location>
        <position position="83"/>
    </location>
    <ligand>
        <name>substrate</name>
    </ligand>
</feature>
<feature type="binding site" evidence="4 11">
    <location>
        <begin position="153"/>
        <end position="156"/>
    </location>
    <ligand>
        <name>substrate</name>
    </ligand>
</feature>
<feature type="binding site" evidence="4 11">
    <location>
        <position position="161"/>
    </location>
    <ligand>
        <name>substrate</name>
    </ligand>
</feature>
<feature type="binding site" evidence="4 11">
    <location>
        <begin position="177"/>
        <end position="180"/>
    </location>
    <ligand>
        <name>substrate</name>
    </ligand>
</feature>
<feature type="binding site" evidence="4 11">
    <location>
        <begin position="194"/>
        <end position="199"/>
    </location>
    <ligand>
        <name>substrate</name>
    </ligand>
</feature>
<feature type="binding site" evidence="4 11">
    <location>
        <position position="230"/>
    </location>
    <ligand>
        <name>substrate</name>
    </ligand>
</feature>
<feature type="binding site" evidence="4 11">
    <location>
        <position position="245"/>
    </location>
    <ligand>
        <name>substrate</name>
    </ligand>
</feature>
<feature type="binding site" evidence="4 11">
    <location>
        <position position="251"/>
    </location>
    <ligand>
        <name>substrate</name>
    </ligand>
</feature>
<feature type="binding site" evidence="4 11">
    <location>
        <begin position="259"/>
        <end position="263"/>
    </location>
    <ligand>
        <name>substrate</name>
    </ligand>
</feature>
<feature type="binding site" evidence="4 11">
    <location>
        <position position="268"/>
    </location>
    <ligand>
        <name>substrate</name>
    </ligand>
</feature>
<feature type="mutagenesis site" description="Decreases starch C3 dephosphorylation. No effect on phosphatase activity with p-nitrophenyl phosphate." evidence="4">
    <original>Y</original>
    <variation>A</variation>
    <location>
        <position position="83"/>
    </location>
</feature>
<feature type="mutagenesis site" description="Nearly abolishes starch C3 dephosphorylation. No effect on phosphatase activity with p-nitrophenyl phosphate." evidence="4">
    <original>Y</original>
    <variation>A</variation>
    <location>
        <position position="85"/>
    </location>
</feature>
<feature type="mutagenesis site" description="Decreases starch C3 dephosphorylation. No effect on phosphatase activity with p-nitrophenyl phosphate." evidence="4">
    <original>Y</original>
    <variation>A</variation>
    <location>
        <position position="135"/>
    </location>
</feature>
<feature type="mutagenesis site" description="Abolishes starch C3 dephosphorylation. No effect on phosphatase activity with p-nitrophenyl phosphate." evidence="4">
    <original>W</original>
    <variation>A</variation>
    <location>
        <position position="136"/>
    </location>
</feature>
<feature type="mutagenesis site" description="Decreases starch C3 dephosphorylation. No effect on phosphatase activity with p-nitrophenyl phosphate." evidence="4">
    <original>R</original>
    <variation>A</variation>
    <location>
        <position position="153"/>
    </location>
</feature>
<feature type="mutagenesis site" description="Decreases starch C3 dephosphorylation. No effect on phosphatase activity with p-nitrophenyl phosphate." evidence="4">
    <original>M</original>
    <variation>A</variation>
    <location>
        <position position="155"/>
    </location>
</feature>
<feature type="mutagenesis site" description="Decreases starch binding and starch C3 dephosphorylation. Moderate decrease of phosphatase activity with soluble substrates; when associated with A-261. Nearly abolishes activity with water-insoluble starch; when associated with A-261." evidence="5">
    <original>R</original>
    <variation>A</variation>
    <location>
        <position position="157"/>
    </location>
</feature>
<feature type="mutagenesis site" description="Decreases starch C3 dephosphorylation. No effect on phosphatase activity with p-nitrophenyl phosphate." evidence="4">
    <original>F</original>
    <variation>A</variation>
    <location>
        <position position="162"/>
    </location>
</feature>
<feature type="mutagenesis site" description="Decreases starch C3 dephosphorylation. No effect on phosphatase activity with p-nitrophenyl phosphate." evidence="4">
    <original>W</original>
    <variation>A</variation>
    <location>
        <position position="180"/>
    </location>
</feature>
<feature type="mutagenesis site" description="Abolishes phosphatase activity." evidence="4 5">
    <original>C</original>
    <variation>S</variation>
    <location>
        <position position="193"/>
    </location>
</feature>
<feature type="mutagenesis site" description="Abolishes glucan phosphatase activity." evidence="5">
    <original>SAGLG</original>
    <variation>TTGFD</variation>
    <location>
        <begin position="194"/>
        <end position="198"/>
    </location>
</feature>
<feature type="mutagenesis site" description="Decreases starch C3 dephosphorylation. No effect on phosphatase activity with p-nitrophenyl phosphate." evidence="4">
    <original>K</original>
    <variation>A</variation>
    <location>
        <position position="245"/>
    </location>
</feature>
<feature type="mutagenesis site" description="Strongly decreases starch binding and starch C3 dephosphorylation. Moderate decrease of phosphatase activity with soluble substrates; when associated with A-157. Nearly abolishes activity with water-insoluble starch; when associated with A-157." evidence="4 5">
    <original>F</original>
    <variation>A</variation>
    <location>
        <position position="261"/>
    </location>
</feature>
<feature type="mutagenesis site" description="Decreases starch C3 dephosphorylation. No effect on phosphatase activity with p-nitrophenyl phosphate." evidence="4">
    <original>E</original>
    <variation>A</variation>
    <location>
        <position position="268"/>
    </location>
</feature>
<feature type="sequence conflict" description="In Ref. 5; AAM64580." evidence="8" ref="5">
    <original>RF</original>
    <variation>SL</variation>
    <location>
        <begin position="38"/>
        <end position="39"/>
    </location>
</feature>
<feature type="strand" evidence="13">
    <location>
        <begin position="80"/>
        <end position="83"/>
    </location>
</feature>
<feature type="helix" evidence="12">
    <location>
        <begin position="87"/>
        <end position="89"/>
    </location>
</feature>
<feature type="strand" evidence="12">
    <location>
        <begin position="93"/>
        <end position="97"/>
    </location>
</feature>
<feature type="strand" evidence="12">
    <location>
        <begin position="100"/>
        <end position="103"/>
    </location>
</feature>
<feature type="helix" evidence="12">
    <location>
        <begin position="109"/>
        <end position="119"/>
    </location>
</feature>
<feature type="strand" evidence="12">
    <location>
        <begin position="121"/>
        <end position="126"/>
    </location>
</feature>
<feature type="helix" evidence="12">
    <location>
        <begin position="130"/>
        <end position="136"/>
    </location>
</feature>
<feature type="helix" evidence="12">
    <location>
        <begin position="140"/>
        <end position="149"/>
    </location>
</feature>
<feature type="strand" evidence="12">
    <location>
        <begin position="153"/>
        <end position="156"/>
    </location>
</feature>
<feature type="helix" evidence="12">
    <location>
        <begin position="164"/>
        <end position="184"/>
    </location>
</feature>
<feature type="strand" evidence="12">
    <location>
        <begin position="186"/>
        <end position="192"/>
    </location>
</feature>
<feature type="strand" evidence="12">
    <location>
        <begin position="194"/>
        <end position="198"/>
    </location>
</feature>
<feature type="helix" evidence="12">
    <location>
        <begin position="199"/>
        <end position="211"/>
    </location>
</feature>
<feature type="helix" evidence="12">
    <location>
        <begin position="216"/>
        <end position="226"/>
    </location>
</feature>
<feature type="helix" evidence="12">
    <location>
        <begin position="233"/>
        <end position="244"/>
    </location>
</feature>
<feature type="helix" evidence="13">
    <location>
        <begin position="248"/>
        <end position="250"/>
    </location>
</feature>
<feature type="helix" evidence="12">
    <location>
        <begin position="253"/>
        <end position="255"/>
    </location>
</feature>
<feature type="turn" evidence="12">
    <location>
        <begin position="258"/>
        <end position="261"/>
    </location>
</feature>
<feature type="helix" evidence="12">
    <location>
        <begin position="266"/>
        <end position="278"/>
    </location>
</feature>
<feature type="turn" evidence="12">
    <location>
        <begin position="279"/>
        <end position="281"/>
    </location>
</feature>
<reference key="1">
    <citation type="journal article" date="2000" name="Nature">
        <title>Sequence and analysis of chromosome 3 of the plant Arabidopsis thaliana.</title>
        <authorList>
            <person name="Salanoubat M."/>
            <person name="Lemcke K."/>
            <person name="Rieger M."/>
            <person name="Ansorge W."/>
            <person name="Unseld M."/>
            <person name="Fartmann B."/>
            <person name="Valle G."/>
            <person name="Bloecker H."/>
            <person name="Perez-Alonso M."/>
            <person name="Obermaier B."/>
            <person name="Delseny M."/>
            <person name="Boutry M."/>
            <person name="Grivell L.A."/>
            <person name="Mache R."/>
            <person name="Puigdomenech P."/>
            <person name="De Simone V."/>
            <person name="Choisne N."/>
            <person name="Artiguenave F."/>
            <person name="Robert C."/>
            <person name="Brottier P."/>
            <person name="Wincker P."/>
            <person name="Cattolico L."/>
            <person name="Weissenbach J."/>
            <person name="Saurin W."/>
            <person name="Quetier F."/>
            <person name="Schaefer M."/>
            <person name="Mueller-Auer S."/>
            <person name="Gabel C."/>
            <person name="Fuchs M."/>
            <person name="Benes V."/>
            <person name="Wurmbach E."/>
            <person name="Drzonek H."/>
            <person name="Erfle H."/>
            <person name="Jordan N."/>
            <person name="Bangert S."/>
            <person name="Wiedelmann R."/>
            <person name="Kranz H."/>
            <person name="Voss H."/>
            <person name="Holland R."/>
            <person name="Brandt P."/>
            <person name="Nyakatura G."/>
            <person name="Vezzi A."/>
            <person name="D'Angelo M."/>
            <person name="Pallavicini A."/>
            <person name="Toppo S."/>
            <person name="Simionati B."/>
            <person name="Conrad A."/>
            <person name="Hornischer K."/>
            <person name="Kauer G."/>
            <person name="Loehnert T.-H."/>
            <person name="Nordsiek G."/>
            <person name="Reichelt J."/>
            <person name="Scharfe M."/>
            <person name="Schoen O."/>
            <person name="Bargues M."/>
            <person name="Terol J."/>
            <person name="Climent J."/>
            <person name="Navarro P."/>
            <person name="Collado C."/>
            <person name="Perez-Perez A."/>
            <person name="Ottenwaelder B."/>
            <person name="Duchemin D."/>
            <person name="Cooke R."/>
            <person name="Laudie M."/>
            <person name="Berger-Llauro C."/>
            <person name="Purnelle B."/>
            <person name="Masuy D."/>
            <person name="de Haan M."/>
            <person name="Maarse A.C."/>
            <person name="Alcaraz J.-P."/>
            <person name="Cottet A."/>
            <person name="Casacuberta E."/>
            <person name="Monfort A."/>
            <person name="Argiriou A."/>
            <person name="Flores M."/>
            <person name="Liguori R."/>
            <person name="Vitale D."/>
            <person name="Mannhaupt G."/>
            <person name="Haase D."/>
            <person name="Schoof H."/>
            <person name="Rudd S."/>
            <person name="Zaccaria P."/>
            <person name="Mewes H.-W."/>
            <person name="Mayer K.F.X."/>
            <person name="Kaul S."/>
            <person name="Town C.D."/>
            <person name="Koo H.L."/>
            <person name="Tallon L.J."/>
            <person name="Jenkins J."/>
            <person name="Rooney T."/>
            <person name="Rizzo M."/>
            <person name="Walts A."/>
            <person name="Utterback T."/>
            <person name="Fujii C.Y."/>
            <person name="Shea T.P."/>
            <person name="Creasy T.H."/>
            <person name="Haas B."/>
            <person name="Maiti R."/>
            <person name="Wu D."/>
            <person name="Peterson J."/>
            <person name="Van Aken S."/>
            <person name="Pai G."/>
            <person name="Militscher J."/>
            <person name="Sellers P."/>
            <person name="Gill J.E."/>
            <person name="Feldblyum T.V."/>
            <person name="Preuss D."/>
            <person name="Lin X."/>
            <person name="Nierman W.C."/>
            <person name="Salzberg S.L."/>
            <person name="White O."/>
            <person name="Venter J.C."/>
            <person name="Fraser C.M."/>
            <person name="Kaneko T."/>
            <person name="Nakamura Y."/>
            <person name="Sato S."/>
            <person name="Kato T."/>
            <person name="Asamizu E."/>
            <person name="Sasamoto S."/>
            <person name="Kimura T."/>
            <person name="Idesawa K."/>
            <person name="Kawashima K."/>
            <person name="Kishida Y."/>
            <person name="Kiyokawa C."/>
            <person name="Kohara M."/>
            <person name="Matsumoto M."/>
            <person name="Matsuno A."/>
            <person name="Muraki A."/>
            <person name="Nakayama S."/>
            <person name="Nakazaki N."/>
            <person name="Shinpo S."/>
            <person name="Takeuchi C."/>
            <person name="Wada T."/>
            <person name="Watanabe A."/>
            <person name="Yamada M."/>
            <person name="Yasuda M."/>
            <person name="Tabata S."/>
        </authorList>
    </citation>
    <scope>NUCLEOTIDE SEQUENCE [LARGE SCALE GENOMIC DNA]</scope>
    <source>
        <strain>cv. Columbia</strain>
    </source>
</reference>
<reference key="2">
    <citation type="journal article" date="2017" name="Plant J.">
        <title>Araport11: a complete reannotation of the Arabidopsis thaliana reference genome.</title>
        <authorList>
            <person name="Cheng C.Y."/>
            <person name="Krishnakumar V."/>
            <person name="Chan A.P."/>
            <person name="Thibaud-Nissen F."/>
            <person name="Schobel S."/>
            <person name="Town C.D."/>
        </authorList>
    </citation>
    <scope>GENOME REANNOTATION</scope>
    <source>
        <strain>cv. Columbia</strain>
    </source>
</reference>
<reference key="3">
    <citation type="submission" date="2006-02" db="EMBL/GenBank/DDBJ databases">
        <title>Arabidopsis ORF clones.</title>
        <authorList>
            <person name="Shinn P."/>
            <person name="Chen H."/>
            <person name="Kim C.J."/>
            <person name="Ecker J.R."/>
        </authorList>
    </citation>
    <scope>NUCLEOTIDE SEQUENCE [LARGE SCALE MRNA]</scope>
    <source>
        <strain>cv. Columbia</strain>
    </source>
</reference>
<reference key="4">
    <citation type="submission" date="2006-07" db="EMBL/GenBank/DDBJ databases">
        <title>Large-scale analysis of RIKEN Arabidopsis full-length (RAFL) cDNAs.</title>
        <authorList>
            <person name="Totoki Y."/>
            <person name="Seki M."/>
            <person name="Ishida J."/>
            <person name="Nakajima M."/>
            <person name="Enju A."/>
            <person name="Kamiya A."/>
            <person name="Narusaka M."/>
            <person name="Shin-i T."/>
            <person name="Nakagawa M."/>
            <person name="Sakamoto N."/>
            <person name="Oishi K."/>
            <person name="Kohara Y."/>
            <person name="Kobayashi M."/>
            <person name="Toyoda A."/>
            <person name="Sakaki Y."/>
            <person name="Sakurai T."/>
            <person name="Iida K."/>
            <person name="Akiyama K."/>
            <person name="Satou M."/>
            <person name="Toyoda T."/>
            <person name="Konagaya A."/>
            <person name="Carninci P."/>
            <person name="Kawai J."/>
            <person name="Hayashizaki Y."/>
            <person name="Shinozaki K."/>
        </authorList>
    </citation>
    <scope>NUCLEOTIDE SEQUENCE [LARGE SCALE MRNA]</scope>
    <source>
        <strain>cv. Columbia</strain>
    </source>
</reference>
<reference key="5">
    <citation type="submission" date="2002-03" db="EMBL/GenBank/DDBJ databases">
        <title>Full-length cDNA from Arabidopsis thaliana.</title>
        <authorList>
            <person name="Brover V.V."/>
            <person name="Troukhan M.E."/>
            <person name="Alexandrov N.A."/>
            <person name="Lu Y.-P."/>
            <person name="Flavell R.B."/>
            <person name="Feldmann K.A."/>
        </authorList>
    </citation>
    <scope>NUCLEOTIDE SEQUENCE [LARGE SCALE MRNA]</scope>
</reference>
<reference key="6">
    <citation type="journal article" date="2011" name="Plant Cell">
        <title>The phosphoglucan phosphatase like sex Four2 dephosphorylates starch at the C3-position in Arabidopsis.</title>
        <authorList>
            <person name="Santelia D."/>
            <person name="Koetting O."/>
            <person name="Seung D."/>
            <person name="Schubert M."/>
            <person name="Thalmann M."/>
            <person name="Bischof S."/>
            <person name="Meekins D.A."/>
            <person name="Lutz A."/>
            <person name="Patron N."/>
            <person name="Gentry M.S."/>
            <person name="Allain F.H."/>
            <person name="Zeeman S.C."/>
        </authorList>
    </citation>
    <scope>FUNCTION</scope>
    <scope>CATALYTIC ACTIVITY</scope>
    <scope>SUBCELLULAR LOCATION</scope>
    <scope>TISSUE SPECIFICITY</scope>
    <scope>INDUCTION</scope>
    <scope>DISRUPTION PHENOTYPE</scope>
</reference>
<reference key="7">
    <citation type="journal article" date="2015" name="J. Biol. Chem.">
        <title>Mechanistic insights into glucan phosphatase activity against polyglucan substrates.</title>
        <authorList>
            <person name="Meekins D.A."/>
            <person name="Raththagala M."/>
            <person name="Auger K.D."/>
            <person name="Turner B.D."/>
            <person name="Santelia D."/>
            <person name="Koetting O."/>
            <person name="Gentry M.S."/>
            <person name="Vander Kooi C.W."/>
        </authorList>
    </citation>
    <scope>FUNCTION</scope>
    <scope>CATALYTIC ACTIVITY</scope>
    <scope>MUTAGENESIS OF ARG-157; CYS-193; 194-SER--GLY-198 AND PHE-261</scope>
    <scope>MOTIF</scope>
    <scope>ACTIVE SITE</scope>
</reference>
<reference evidence="10 11" key="8">
    <citation type="journal article" date="2013" name="Plant Cell">
        <title>Structure of the Arabidopsis glucan phosphatase like sex four2 reveals a unique mechanism for starch dephosphorylation.</title>
        <authorList>
            <person name="Meekins D.A."/>
            <person name="Guo H.F."/>
            <person name="Husodo S."/>
            <person name="Paasch B.C."/>
            <person name="Bridges T.M."/>
            <person name="Santelia D."/>
            <person name="Kotting O."/>
            <person name="Vander Kooi C.W."/>
            <person name="Gentry M.S."/>
        </authorList>
    </citation>
    <scope>X-RAY CRYSTALLOGRAPHY (1.64 ANGSTROMS) OF 79-282 IN COMPLEX WITH THE SUBSTRATE ANALOGS MALTOHEXAOSE AND PHOSPHATE</scope>
    <scope>FUNCTION</scope>
    <scope>CATALYTIC ACTIVITY</scope>
    <scope>ACTIVE SITE</scope>
    <scope>MUTAGENESIS OF TYR-83; TYR-85; TYR-135; TRP-136; ARG-153; MET-155; ARG-157; PHE-162; TRP-180; CYS-193; LYS-245; PHE-261 AND GLU-268</scope>
</reference>